<comment type="function">
    <text evidence="2 6">Hydroxylase/desaturase; part of the gene cluster that mediates the biosynthesis of oxaleimides, cytotoxic compounds containing an unusual disubstituted succinimide moiety (PubMed:28365998). The first step of the pathway is provided by the HR-PKS poxF that serves in a new mode of collaborative biosynthesis with the PKS-NRPS poxE, by providing the olefin containing amino acid substrate via the synthesis of an ACP-bound dec-4-enoate (PubMed:28365998). The cytochrome P450 monooxygenase poxM-catalyzed oxidation at the alpha-position creates the enzyme-bound 2-hydroxydec-4-enoyl-ACP thioester, which may be prone to spontaneous hydrolysis to yield 2-hydroxydec-4-enoic acid due to increased electrophilicity of the carbonyl (PubMed:28365998). 2-hydroxydec-4-enoic acid can then be further oxidized by poxM to yield the alpha-ketoacid 2-oxodec-4-enoicacid, which is reductively aminated by the aminotransferase poxL to yield (S,E)-2-aminodec-4-enoic acid (PubMed:28365998). The Hybrid PKS-NRPS synthetase poxE then performs condensation between the octaketide product of its PKS modules and the amino group of (S,E)-2-aminodec-4-enoic acid which is activated and incorporated by the adenylation domain (PubMed:28365998). The resulting aminoacyl product can be cyclized by the Diels-Alderase PoxQ and reductively released by the reductive (R) domain of poxE to yield an aldehyde intermediate (Probable) (PubMed:28365998). The released aldehyde is then substrate for a Knoevenagel condensation by the hydrolyase poxO followed by an oxidation at the 5-position of the pyrrolidone ring (PubMed:28365998). The presence of the olefin from the amino acid building block allows for migration of the substituted allyl group to occur (PubMed:28365998). This allylic transposition reaction takes place in a conjugate addition, semipinacol-like fashion to yield a succinimide intermediate (PubMed:28365998). Iterative two-electron oxidations of the C7 methyl of the succinimide intermediate to the carboxylic acid can be catalyzed by one of two remaining cytochrome P450 monooxygenasess poxC or poxD to yield oxaleimide A (PubMed:28365998). Subsequent oxidation yields the maleimide scaffold oxaleimide I (PubMed:28365998). Both oxaleimide A and oxaleimide I can undergo oxidative modifications in the decalin ring to yield the series of products oxaleimides B to H (PubMed:28365998).</text>
</comment>
<comment type="pathway">
    <text evidence="5">Secondary metabolite biosynthesis.</text>
</comment>
<comment type="induction">
    <text evidence="2">Expression is positively regulated by the oxaleimides biosynthesis cluster-specific transcription factor poxB.</text>
</comment>
<comment type="similarity">
    <text evidence="4">Belongs to the asaB hydroxylase/desaturase family.</text>
</comment>
<protein>
    <recommendedName>
        <fullName evidence="3">Hydroxylase/desaturase poxK</fullName>
        <ecNumber evidence="5">1.-.-.-</ecNumber>
    </recommendedName>
    <alternativeName>
        <fullName evidence="3">Oxaleimides biosynthesis cluster protein K</fullName>
    </alternativeName>
</protein>
<reference key="1">
    <citation type="journal article" date="2013" name="PLoS ONE">
        <title>Genomic and secretomic analyses reveal unique features of the lignocellulolytic enzyme system of Penicillium decumbens.</title>
        <authorList>
            <person name="Liu G."/>
            <person name="Zhang L."/>
            <person name="Wei X."/>
            <person name="Zou G."/>
            <person name="Qin Y."/>
            <person name="Ma L."/>
            <person name="Li J."/>
            <person name="Zheng H."/>
            <person name="Wang S."/>
            <person name="Wang C."/>
            <person name="Xun L."/>
            <person name="Zhao G.-P."/>
            <person name="Zhou Z."/>
            <person name="Qu Y."/>
        </authorList>
    </citation>
    <scope>NUCLEOTIDE SEQUENCE [LARGE SCALE GENOMIC DNA]</scope>
    <source>
        <strain>114-2 / CGMCC 5302</strain>
    </source>
</reference>
<reference key="2">
    <citation type="journal article" date="2017" name="J. Am. Chem. Soc.">
        <title>Collaborative Biosynthesis of Maleimide- and Succinimide-Containing Natural Products by Fungal Polyketide Megasynthases.</title>
        <authorList>
            <person name="Sato M."/>
            <person name="Dander J.E."/>
            <person name="Sato C."/>
            <person name="Hung Y.S."/>
            <person name="Gao S.S."/>
            <person name="Tang M.C."/>
            <person name="Hang L."/>
            <person name="Winter J.M."/>
            <person name="Garg N.K."/>
            <person name="Watanabe K."/>
            <person name="Tang Y."/>
        </authorList>
    </citation>
    <scope>FUNCTION</scope>
    <scope>INDUCTION</scope>
    <scope>PATHWAY</scope>
</reference>
<reference key="3">
    <citation type="journal article" date="2020" name="Chem. Commun. (Camb.)">
        <title>Evidence for enzyme catalysed intramolecular [4+2] Diels-Alder cyclization during the biosynthesis of pyrichalasin H.</title>
        <authorList>
            <person name="Hantke V."/>
            <person name="Skellam E.J."/>
            <person name="Cox R.J."/>
        </authorList>
    </citation>
    <scope>FUNCTION</scope>
</reference>
<gene>
    <name evidence="3" type="primary">poxK</name>
    <name type="ORF">PDE_04023</name>
</gene>
<name>POXK_PENO1</name>
<organism>
    <name type="scientific">Penicillium oxalicum (strain 114-2 / CGMCC 5302)</name>
    <name type="common">Penicillium decumbens</name>
    <dbReference type="NCBI Taxonomy" id="933388"/>
    <lineage>
        <taxon>Eukaryota</taxon>
        <taxon>Fungi</taxon>
        <taxon>Dikarya</taxon>
        <taxon>Ascomycota</taxon>
        <taxon>Pezizomycotina</taxon>
        <taxon>Eurotiomycetes</taxon>
        <taxon>Eurotiomycetidae</taxon>
        <taxon>Eurotiales</taxon>
        <taxon>Aspergillaceae</taxon>
        <taxon>Penicillium</taxon>
    </lineage>
</organism>
<dbReference type="EC" id="1.-.-.-" evidence="5"/>
<dbReference type="EMBL" id="KB644411">
    <property type="protein sequence ID" value="EPS29074.1"/>
    <property type="molecule type" value="Genomic_DNA"/>
</dbReference>
<dbReference type="SMR" id="S7ZFL4"/>
<dbReference type="STRING" id="933388.S7ZFL4"/>
<dbReference type="eggNOG" id="ENOG502RXYQ">
    <property type="taxonomic scope" value="Eukaryota"/>
</dbReference>
<dbReference type="HOGENOM" id="CLU_042688_3_0_1"/>
<dbReference type="OrthoDB" id="412788at2759"/>
<dbReference type="PhylomeDB" id="S7ZFL4"/>
<dbReference type="Proteomes" id="UP000019376">
    <property type="component" value="Unassembled WGS sequence"/>
</dbReference>
<dbReference type="GO" id="GO:0016491">
    <property type="term" value="F:oxidoreductase activity"/>
    <property type="evidence" value="ECO:0007669"/>
    <property type="project" value="UniProtKB-KW"/>
</dbReference>
<dbReference type="InterPro" id="IPR044053">
    <property type="entry name" value="AsaB-like"/>
</dbReference>
<dbReference type="NCBIfam" id="NF041278">
    <property type="entry name" value="CmcJ_NvfI_EfuI"/>
    <property type="match status" value="1"/>
</dbReference>
<dbReference type="PANTHER" id="PTHR34598">
    <property type="entry name" value="BLL6449 PROTEIN"/>
    <property type="match status" value="1"/>
</dbReference>
<dbReference type="PANTHER" id="PTHR34598:SF1">
    <property type="entry name" value="PUTATIVE (AFU_ORTHOLOGUE AFUA_3G13140)-RELATED"/>
    <property type="match status" value="1"/>
</dbReference>
<sequence length="325" mass="35598">MTATATPVPTVASHAQDITLPPPPKGDITTPILFAQDFQKPSTGYMFIKNPPPAGVPYTNIRGEPAMVTVEDLRGKENSVNLDRDSLQVLQGLTDVPRSPEVNWNSVESVEKTFYPAVEAAIKSAIPGAHTVHIFRHGIRHTQNWPVPYNPPAMIAHLDQTGPAAINRVLRHMGPVEGPRLLQGRYRIVHFWTPLNGPVYTCPVAVASSATVKDNDIQIFVSHLGGIGGLDMPLGRPVAKPDASEQYREDFGAPRYADGQRWFYLSGITQDEALLIQIFDSNALQKDSTVQGGRAVHSAFRDPRTPQGAPDRWSIEVSCLVFSDE</sequence>
<proteinExistence type="evidence at transcript level"/>
<evidence type="ECO:0000256" key="1">
    <source>
        <dbReference type="SAM" id="MobiDB-lite"/>
    </source>
</evidence>
<evidence type="ECO:0000269" key="2">
    <source>
    </source>
</evidence>
<evidence type="ECO:0000303" key="3">
    <source>
    </source>
</evidence>
<evidence type="ECO:0000305" key="4"/>
<evidence type="ECO:0000305" key="5">
    <source>
    </source>
</evidence>
<evidence type="ECO:0000305" key="6">
    <source>
    </source>
</evidence>
<keyword id="KW-0560">Oxidoreductase</keyword>
<keyword id="KW-1185">Reference proteome</keyword>
<feature type="chain" id="PRO_0000453776" description="Hydroxylase/desaturase poxK">
    <location>
        <begin position="1"/>
        <end position="325"/>
    </location>
</feature>
<feature type="region of interest" description="Disordered" evidence="1">
    <location>
        <begin position="1"/>
        <end position="25"/>
    </location>
</feature>
<feature type="compositionally biased region" description="Low complexity" evidence="1">
    <location>
        <begin position="1"/>
        <end position="12"/>
    </location>
</feature>
<accession>S7ZFL4</accession>